<keyword id="KW-0903">Direct protein sequencing</keyword>
<keyword id="KW-1015">Disulfide bond</keyword>
<keyword id="KW-0325">Glycoprotein</keyword>
<keyword id="KW-0378">Hydrolase</keyword>
<keyword id="KW-0645">Protease</keyword>
<keyword id="KW-1185">Reference proteome</keyword>
<keyword id="KW-0720">Serine protease</keyword>
<keyword id="KW-0732">Signal</keyword>
<keyword id="KW-0865">Zymogen</keyword>
<feature type="signal peptide" evidence="4">
    <location>
        <begin position="1"/>
        <end position="19"/>
    </location>
</feature>
<feature type="chain" id="PRO_5000077652" description="Acrosin" evidence="4">
    <location>
        <begin position="20"/>
        <end position="346"/>
    </location>
</feature>
<feature type="chain" id="PRO_0000415801" description="Acrosin light chain" evidence="4 8">
    <location>
        <begin position="20"/>
        <end position="40"/>
    </location>
</feature>
<feature type="chain" id="PRO_0000415802" description="Acrosin heavy chain" evidence="8">
    <location>
        <begin position="41"/>
        <end position="265"/>
    </location>
</feature>
<feature type="propeptide" id="PRO_0000415803" evidence="1">
    <location>
        <begin position="266"/>
        <end position="346"/>
    </location>
</feature>
<feature type="domain" description="Peptidase S1" evidence="5">
    <location>
        <begin position="41"/>
        <end position="284"/>
    </location>
</feature>
<feature type="active site" description="Charge relay system" evidence="3">
    <location>
        <position position="85"/>
    </location>
</feature>
<feature type="active site" description="Charge relay system" evidence="3">
    <location>
        <position position="134"/>
    </location>
</feature>
<feature type="active site" description="Charge relay system" evidence="3">
    <location>
        <position position="234"/>
    </location>
</feature>
<feature type="glycosylation site" description="N-linked (GlcNAc...) asparagine" evidence="4">
    <location>
        <position position="128"/>
    </location>
</feature>
<feature type="glycosylation site" description="N-linked (GlcNAc...) asparagine" evidence="4">
    <location>
        <position position="204"/>
    </location>
</feature>
<feature type="disulfide bond" description="Interchain (between light and heavy chains)" evidence="3 5">
    <location>
        <begin position="24"/>
        <end position="146"/>
    </location>
</feature>
<feature type="disulfide bond" description="Interchain (between light and heavy chains)" evidence="3 5">
    <location>
        <begin position="27"/>
        <end position="154"/>
    </location>
</feature>
<feature type="disulfide bond" evidence="3 5">
    <location>
        <begin position="70"/>
        <end position="86"/>
    </location>
</feature>
<feature type="disulfide bond" evidence="3 5">
    <location>
        <begin position="168"/>
        <end position="240"/>
    </location>
</feature>
<feature type="disulfide bond" evidence="3 5">
    <location>
        <begin position="203"/>
        <end position="219"/>
    </location>
</feature>
<feature type="disulfide bond" evidence="3 5">
    <location>
        <begin position="230"/>
        <end position="260"/>
    </location>
</feature>
<dbReference type="EC" id="3.4.21.10" evidence="2"/>
<dbReference type="EMBL" id="AM167974">
    <property type="protein sequence ID" value="CAJ45027.1"/>
    <property type="molecule type" value="mRNA"/>
</dbReference>
<dbReference type="SMR" id="Q2UVH8"/>
<dbReference type="MEROPS" id="S01.223"/>
<dbReference type="GlyCosmos" id="Q2UVH8">
    <property type="glycosylation" value="2 sites, No reported glycans"/>
</dbReference>
<dbReference type="InParanoid" id="Q2UVH8"/>
<dbReference type="BRENDA" id="3.4.21.10">
    <property type="organism ID" value="3210"/>
</dbReference>
<dbReference type="SABIO-RK" id="Q2UVH8"/>
<dbReference type="Proteomes" id="UP000001645">
    <property type="component" value="Unplaced"/>
</dbReference>
<dbReference type="GO" id="GO:0005615">
    <property type="term" value="C:extracellular space"/>
    <property type="evidence" value="ECO:0000314"/>
    <property type="project" value="AgBase"/>
</dbReference>
<dbReference type="GO" id="GO:0097180">
    <property type="term" value="C:serine protease inhibitor complex"/>
    <property type="evidence" value="ECO:0000314"/>
    <property type="project" value="AgBase"/>
</dbReference>
<dbReference type="GO" id="GO:0004040">
    <property type="term" value="F:amidase activity"/>
    <property type="evidence" value="ECO:0000314"/>
    <property type="project" value="AgBase"/>
</dbReference>
<dbReference type="GO" id="GO:0004252">
    <property type="term" value="F:serine-type endopeptidase activity"/>
    <property type="evidence" value="ECO:0007669"/>
    <property type="project" value="UniProtKB-EC"/>
</dbReference>
<dbReference type="GO" id="GO:0007340">
    <property type="term" value="P:acrosome reaction"/>
    <property type="evidence" value="ECO:0000250"/>
    <property type="project" value="UniProtKB"/>
</dbReference>
<dbReference type="GO" id="GO:0006508">
    <property type="term" value="P:proteolysis"/>
    <property type="evidence" value="ECO:0007669"/>
    <property type="project" value="UniProtKB-KW"/>
</dbReference>
<dbReference type="CDD" id="cd00190">
    <property type="entry name" value="Tryp_SPc"/>
    <property type="match status" value="1"/>
</dbReference>
<dbReference type="FunFam" id="2.40.10.10:FF:000003">
    <property type="entry name" value="Transmembrane serine protease 3"/>
    <property type="match status" value="1"/>
</dbReference>
<dbReference type="Gene3D" id="2.40.10.10">
    <property type="entry name" value="Trypsin-like serine proteases"/>
    <property type="match status" value="2"/>
</dbReference>
<dbReference type="InterPro" id="IPR009003">
    <property type="entry name" value="Peptidase_S1_PA"/>
</dbReference>
<dbReference type="InterPro" id="IPR043504">
    <property type="entry name" value="Peptidase_S1_PA_chymotrypsin"/>
</dbReference>
<dbReference type="InterPro" id="IPR001314">
    <property type="entry name" value="Peptidase_S1A"/>
</dbReference>
<dbReference type="InterPro" id="IPR001254">
    <property type="entry name" value="Trypsin_dom"/>
</dbReference>
<dbReference type="InterPro" id="IPR018114">
    <property type="entry name" value="TRYPSIN_HIS"/>
</dbReference>
<dbReference type="InterPro" id="IPR033116">
    <property type="entry name" value="TRYPSIN_SER"/>
</dbReference>
<dbReference type="PANTHER" id="PTHR24252:SF8">
    <property type="entry name" value="ACROSIN"/>
    <property type="match status" value="1"/>
</dbReference>
<dbReference type="PANTHER" id="PTHR24252">
    <property type="entry name" value="ACROSIN-RELATED"/>
    <property type="match status" value="1"/>
</dbReference>
<dbReference type="Pfam" id="PF00089">
    <property type="entry name" value="Trypsin"/>
    <property type="match status" value="1"/>
</dbReference>
<dbReference type="PRINTS" id="PR00722">
    <property type="entry name" value="CHYMOTRYPSIN"/>
</dbReference>
<dbReference type="SMART" id="SM00020">
    <property type="entry name" value="Tryp_SPc"/>
    <property type="match status" value="1"/>
</dbReference>
<dbReference type="SUPFAM" id="SSF50494">
    <property type="entry name" value="Trypsin-like serine proteases"/>
    <property type="match status" value="1"/>
</dbReference>
<dbReference type="PROSITE" id="PS50240">
    <property type="entry name" value="TRYPSIN_DOM"/>
    <property type="match status" value="1"/>
</dbReference>
<dbReference type="PROSITE" id="PS00134">
    <property type="entry name" value="TRYPSIN_HIS"/>
    <property type="match status" value="1"/>
</dbReference>
<dbReference type="PROSITE" id="PS00135">
    <property type="entry name" value="TRYPSIN_SER"/>
    <property type="match status" value="1"/>
</dbReference>
<organism>
    <name type="scientific">Meleagris gallopavo</name>
    <name type="common">Wild turkey</name>
    <dbReference type="NCBI Taxonomy" id="9103"/>
    <lineage>
        <taxon>Eukaryota</taxon>
        <taxon>Metazoa</taxon>
        <taxon>Chordata</taxon>
        <taxon>Craniata</taxon>
        <taxon>Vertebrata</taxon>
        <taxon>Euteleostomi</taxon>
        <taxon>Archelosauria</taxon>
        <taxon>Archosauria</taxon>
        <taxon>Dinosauria</taxon>
        <taxon>Saurischia</taxon>
        <taxon>Theropoda</taxon>
        <taxon>Coelurosauria</taxon>
        <taxon>Aves</taxon>
        <taxon>Neognathae</taxon>
        <taxon>Galloanserae</taxon>
        <taxon>Galliformes</taxon>
        <taxon>Phasianidae</taxon>
        <taxon>Meleagridinae</taxon>
        <taxon>Meleagris</taxon>
    </lineage>
</organism>
<proteinExistence type="evidence at protein level"/>
<sequence length="346" mass="37950">MALLLPLAVLLAACRPGHGFSGGCDTCGLRPVAYHYGGMRVVGGTEALHGSWPWIVSIQNPRFAGTGHMCGGSLITPQWVLSAAHCFGRPNYILQSRVVIGANDLTQLGQEVEVRSIRRAILHEYFNNKTMINDIALLELDRPVHCSYYIQLACVPDPSLRVSELTDCYVSGWGHMGMRSAAPTQTAEVLQEAKVHLLDLNLCNSSHWYDGVLHSHNLCAGYPQGGIDTCQGDSGGPLMCRDSSADYFWLVGVTSWGRGCGRAFRPGIYTSTQHFYNWILLQVRAAAHPTSRTWSHYMSTSSYHHGPNAVPTQPSVSDSCPFPAQKLREFFTGVQNLLQSLWGSKA</sequence>
<comment type="function">
    <text evidence="2">Serine protease of trypsin-like cleavage specificity. Synthesized in a zymogen form, proacrosin and stored in the acrosome (By similarity).</text>
</comment>
<comment type="catalytic activity">
    <reaction evidence="2">
        <text>Preferential cleavage: Arg-|-Xaa, Lys-|-Xaa.</text>
        <dbReference type="EC" id="3.4.21.10"/>
    </reaction>
</comment>
<comment type="activity regulation">
    <text evidence="6 7 8">Inhibited by aprotinin, ovomucoid, soybean trypsin inhibitor, benzamidine, p-aminobenzamidine, and zinc ions. Activity also inhibited by a Kazal-type proteinase inhibitor.</text>
</comment>
<comment type="biophysicochemical properties">
    <kinetics>
        <KM evidence="6 7">1.17 mM for N-alpha-benzoyl-DL-arginine-p-nitroanilide (at 25 degrees Celsius)</KM>
        <Vmax evidence="6 7">1.5 mmol/min/mg enzyme toward N-alpha-benzoyl-DL-arginine-p-nitroanilide</Vmax>
    </kinetics>
    <phDependence>
        <text evidence="6 7">Optimum pH is 8.0-8.5.</text>
    </phDependence>
    <temperatureDependence>
        <text evidence="6 7">Active between 20.0-37.0 degrees Celsius. Activity increases above 25 degrees Celsius.</text>
    </temperatureDependence>
</comment>
<comment type="subunit">
    <text evidence="1">Heavy chain (catalytic) and a light chain linked by two disulfide bonds.</text>
</comment>
<comment type="PTM">
    <text evidence="8 9">Glycosylated.</text>
</comment>
<comment type="mass spectrometry" mass="30874.0" method="Electrospray" evidence="8">
    <molecule>Acrosin heavy chain</molecule>
</comment>
<comment type="miscellaneous">
    <text evidence="8">On the 2D-gel the determined pI of this protein is: 6.4.</text>
</comment>
<comment type="similarity">
    <text evidence="5">Belongs to the peptidase S1 family.</text>
</comment>
<reference evidence="11 12" key="1">
    <citation type="journal article" date="2010" name="Comp. Biochem. Physiol.">
        <title>Isolation, characterization and cDNA sequencing of acrosin from turkey spermatozoa.</title>
        <authorList>
            <person name="Slowinska M."/>
            <person name="Olczak M."/>
            <person name="Liszewska E."/>
            <person name="Watorek W."/>
            <person name="Ciereszko A."/>
        </authorList>
    </citation>
    <scope>NUCLEOTIDE SEQUENCE [MRNA]</scope>
    <scope>PROTEIN SEQUENCE OF 41-66</scope>
    <scope>ACTIVITY REGULATION</scope>
    <scope>GLYCOSYLATION</scope>
    <scope>MASS SPECTROMETRY</scope>
    <source>
        <tissue evidence="8">Sperm</tissue>
        <tissue evidence="12">Testis</tissue>
    </source>
</reference>
<reference evidence="11" key="2">
    <citation type="journal article" date="1988" name="Biol. Reprod.">
        <title>Turkey acrosin. I. Isolation, purification, and partial characterization.</title>
        <authorList>
            <person name="Richardson M.E."/>
            <person name="Bodine A.B."/>
            <person name="Froman D.P."/>
            <person name="Thurston R.J."/>
        </authorList>
    </citation>
    <scope>GLYCOSYLATION</scope>
    <source>
        <tissue evidence="9">Sperm</tissue>
    </source>
</reference>
<reference evidence="11" key="3">
    <citation type="journal article" date="1992" name="Poult. Sci.">
        <title>Research note: kinetic and inhibition studies with turkey acrosin.</title>
        <authorList>
            <person name="Richardson M.E."/>
            <person name="Korn N."/>
            <person name="Bodine A.B."/>
            <person name="Thurston R.J."/>
        </authorList>
    </citation>
    <scope>ACTIVITY REGULATION</scope>
    <scope>BIOPHYSICOCHEMICAL PROPERTIES</scope>
    <source>
        <tissue evidence="7">Sperm</tissue>
    </source>
</reference>
<reference evidence="11" key="4">
    <citation type="journal article" date="2001" name="Theriogenology">
        <title>Acrosin activity in turkey spermatozoa: assay by clinical method and effect of zinc and benzamidine on the activity.</title>
        <authorList>
            <person name="Glogowski J."/>
            <person name="Jankowski J."/>
            <person name="Faruga A."/>
            <person name="Ottobre J.S."/>
            <person name="Ciereszko A."/>
        </authorList>
    </citation>
    <scope>ACTIVITY REGULATION</scope>
    <scope>BIOPHYSICOCHEMICAL PROPERTIES</scope>
    <source>
        <tissue evidence="6">Sperm</tissue>
    </source>
</reference>
<protein>
    <recommendedName>
        <fullName evidence="10">Acrosin</fullName>
        <ecNumber evidence="2">3.4.21.10</ecNumber>
    </recommendedName>
    <alternativeName>
        <fullName evidence="10">Proacrosin</fullName>
        <shortName evidence="12">Proacro1</shortName>
    </alternativeName>
    <component>
        <recommendedName>
            <fullName evidence="10">Acrosin light chain</fullName>
        </recommendedName>
    </component>
    <component>
        <recommendedName>
            <fullName evidence="10">Acrosin heavy chain</fullName>
        </recommendedName>
    </component>
</protein>
<accession>Q2UVH8</accession>
<name>ACRO_MELGA</name>
<gene>
    <name evidence="1" type="primary">ACR</name>
</gene>
<evidence type="ECO:0000250" key="1">
    <source>
        <dbReference type="UniProtKB" id="P10323"/>
    </source>
</evidence>
<evidence type="ECO:0000250" key="2">
    <source>
        <dbReference type="UniProtKB" id="P10626"/>
    </source>
</evidence>
<evidence type="ECO:0000250" key="3">
    <source>
        <dbReference type="UniProtKB" id="Q9GL10"/>
    </source>
</evidence>
<evidence type="ECO:0000255" key="4"/>
<evidence type="ECO:0000255" key="5">
    <source>
        <dbReference type="PROSITE-ProRule" id="PRU00274"/>
    </source>
</evidence>
<evidence type="ECO:0000269" key="6">
    <source>
    </source>
</evidence>
<evidence type="ECO:0000269" key="7">
    <source>
    </source>
</evidence>
<evidence type="ECO:0000269" key="8">
    <source>
    </source>
</evidence>
<evidence type="ECO:0000269" key="9">
    <source>
    </source>
</evidence>
<evidence type="ECO:0000303" key="10">
    <source>
    </source>
</evidence>
<evidence type="ECO:0000305" key="11"/>
<evidence type="ECO:0000312" key="12">
    <source>
        <dbReference type="EMBL" id="CAJ45027.1"/>
    </source>
</evidence>